<feature type="chain" id="PRO_0000106065" description="Non-structural protein of 12.9 kDa">
    <location>
        <begin position="1"/>
        <end position="109"/>
    </location>
</feature>
<gene>
    <name type="ORF">5a</name>
</gene>
<name>NS12_CVHOC</name>
<accession>Q04853</accession>
<accession>Q696P7</accession>
<organismHost>
    <name type="scientific">Homo sapiens</name>
    <name type="common">Human</name>
    <dbReference type="NCBI Taxonomy" id="9606"/>
</organismHost>
<comment type="function">
    <text>May act as membrane-anchoring region for structural proteins during virus assembly, or play a role in membrane association of the viral polymerase during replication.</text>
</comment>
<comment type="similarity">
    <text evidence="1">Belongs to the coronaviruses ns12.7 protein family.</text>
</comment>
<evidence type="ECO:0000305" key="1"/>
<keyword id="KW-1185">Reference proteome</keyword>
<proteinExistence type="inferred from homology"/>
<reference key="1">
    <citation type="journal article" date="1993" name="Virology">
        <title>Human coronavirus OC43 RNA 4 lacks two open reading frames located downstream of the S gene of bovine coronavirus.</title>
        <authorList>
            <person name="Mounir S."/>
            <person name="Talbot P.J."/>
        </authorList>
    </citation>
    <scope>NUCLEOTIDE SEQUENCE [GENOMIC RNA]</scope>
</reference>
<reference key="2">
    <citation type="journal article" date="2004" name="J. Virol.">
        <title>Human respiratory coronavirus OC43: genetic stability and neuroinvasion.</title>
        <authorList>
            <person name="St Jean J.R."/>
            <person name="Jacomy H."/>
            <person name="Desforges M."/>
            <person name="Vabret A."/>
            <person name="Freymuth F."/>
            <person name="Talbot P.J."/>
        </authorList>
    </citation>
    <scope>NUCLEOTIDE SEQUENCE [GENOMIC RNA]</scope>
    <source>
        <strain>Isolate ATCC VR-759</strain>
        <strain>Isolate clinical OC43-Paris</strain>
    </source>
</reference>
<reference key="3">
    <citation type="journal article" date="2005" name="J. Virol.">
        <title>Complete genomic sequence of human coronavirus OC43: molecular clock analysis suggests a relatively recent zoonotic coronavirus transmission event.</title>
        <authorList>
            <person name="Vijgen L."/>
            <person name="Keyaerts E."/>
            <person name="Moes E."/>
            <person name="Thoelen I."/>
            <person name="Wollants E."/>
            <person name="Lemey P."/>
            <person name="Vandamme A.M."/>
            <person name="Van Ranst M."/>
        </authorList>
    </citation>
    <scope>NUCLEOTIDE SEQUENCE [GENOMIC RNA]</scope>
    <source>
        <strain>Isolate ATCC VR-759</strain>
    </source>
</reference>
<protein>
    <recommendedName>
        <fullName>Non-structural protein of 12.9 kDa</fullName>
        <shortName>ns12.9</shortName>
    </recommendedName>
    <alternativeName>
        <fullName>12.9 kDa accessory protein</fullName>
    </alternativeName>
    <alternativeName>
        <fullName>NS2</fullName>
    </alternativeName>
</protein>
<organism>
    <name type="scientific">Human coronavirus OC43</name>
    <name type="common">HCoV-OC43</name>
    <dbReference type="NCBI Taxonomy" id="31631"/>
    <lineage>
        <taxon>Viruses</taxon>
        <taxon>Riboviria</taxon>
        <taxon>Orthornavirae</taxon>
        <taxon>Pisuviricota</taxon>
        <taxon>Pisoniviricetes</taxon>
        <taxon>Nidovirales</taxon>
        <taxon>Cornidovirineae</taxon>
        <taxon>Coronaviridae</taxon>
        <taxon>Orthocoronavirinae</taxon>
        <taxon>Betacoronavirus</taxon>
        <taxon>Embecovirus</taxon>
        <taxon>Betacoronavirus 1</taxon>
    </lineage>
</organism>
<dbReference type="EMBL" id="M99576">
    <property type="protein sequence ID" value="AAA02569.1"/>
    <property type="molecule type" value="Genomic_RNA"/>
</dbReference>
<dbReference type="EMBL" id="AY585228">
    <property type="protein sequence ID" value="AAT84355.1"/>
    <property type="molecule type" value="Genomic_RNA"/>
</dbReference>
<dbReference type="EMBL" id="AY585229">
    <property type="protein sequence ID" value="AAT84363.1"/>
    <property type="molecule type" value="Genomic_RNA"/>
</dbReference>
<dbReference type="EMBL" id="AY391777">
    <property type="protein sequence ID" value="AAR01016.1"/>
    <property type="molecule type" value="Genomic_RNA"/>
</dbReference>
<dbReference type="PIR" id="A44275">
    <property type="entry name" value="A44275"/>
</dbReference>
<dbReference type="TCDB" id="1.A.49.1.1">
    <property type="family name" value="the human coronavirus ns12,9 viroporin (ns12,9) family"/>
</dbReference>
<dbReference type="OrthoDB" id="15705at10239"/>
<dbReference type="Proteomes" id="UP000007552">
    <property type="component" value="Genome"/>
</dbReference>
<dbReference type="Proteomes" id="UP000100580">
    <property type="component" value="Genome"/>
</dbReference>
<dbReference type="Proteomes" id="UP000180344">
    <property type="component" value="Genome"/>
</dbReference>
<dbReference type="InterPro" id="IPR006841">
    <property type="entry name" value="Corona_NS2"/>
</dbReference>
<dbReference type="Pfam" id="PF04753">
    <property type="entry name" value="Corona_NS12-7"/>
    <property type="match status" value="1"/>
</dbReference>
<sequence>MDIWRPEKKYLRYINGFNVSELEDACFKFNYQFPKVGYCRVPSHAWCRNQGRFCATFTLYGKSKHYDKYFGVINGFTAFANTVEDAVNKLVFLAVDFITWRRQELNVYG</sequence>